<organism>
    <name type="scientific">Kluyveromyces lactis (strain ATCC 8585 / CBS 2359 / DSM 70799 / NBRC 1267 / NRRL Y-1140 / WM37)</name>
    <name type="common">Yeast</name>
    <name type="synonym">Candida sphaerica</name>
    <dbReference type="NCBI Taxonomy" id="284590"/>
    <lineage>
        <taxon>Eukaryota</taxon>
        <taxon>Fungi</taxon>
        <taxon>Dikarya</taxon>
        <taxon>Ascomycota</taxon>
        <taxon>Saccharomycotina</taxon>
        <taxon>Saccharomycetes</taxon>
        <taxon>Saccharomycetales</taxon>
        <taxon>Saccharomycetaceae</taxon>
        <taxon>Kluyveromyces</taxon>
    </lineage>
</organism>
<evidence type="ECO:0000250" key="1">
    <source>
        <dbReference type="UniProtKB" id="O13836"/>
    </source>
</evidence>
<evidence type="ECO:0000250" key="2">
    <source>
        <dbReference type="UniProtKB" id="O70348"/>
    </source>
</evidence>
<evidence type="ECO:0000250" key="3">
    <source>
        <dbReference type="UniProtKB" id="P53063"/>
    </source>
</evidence>
<evidence type="ECO:0000250" key="4">
    <source>
        <dbReference type="UniProtKB" id="Q06349"/>
    </source>
</evidence>
<evidence type="ECO:0000250" key="5">
    <source>
        <dbReference type="UniProtKB" id="Q5AAT0"/>
    </source>
</evidence>
<evidence type="ECO:0000305" key="6"/>
<keyword id="KW-0378">Hydrolase</keyword>
<keyword id="KW-0479">Metal-binding</keyword>
<keyword id="KW-0507">mRNA processing</keyword>
<keyword id="KW-0540">Nuclease</keyword>
<keyword id="KW-0547">Nucleotide-binding</keyword>
<keyword id="KW-0539">Nucleus</keyword>
<keyword id="KW-1185">Reference proteome</keyword>
<keyword id="KW-0694">RNA-binding</keyword>
<sequence>MVLSSSLFVQKRSTTTALKQPKELGHYSRTQDNGFLVNDDSRLAYYYLPDTDLDKKLDLLSGIKKFKECNTEEFDSTTLHGLLSTLEEYERRKSKKTKVDIITFRGIIRKLISSAFDSSQFNPVNFRIVSFDGQLFIKEVKTDASETSINKNRESLQARAYYSGYKFEALATLSLPLPLVPRTTLEKRPKKIINNGDQFISMVRTGIGKCKILIGAEVDCIFDFKEDSDDNLKHYAELKCTTMVNTVSDAHKFERKLFKTWLQCFLVGINRIIYGFRDDNFMLKTVEEFTTSEVPLILKNNNPQMQTVCVDAIKWYGAFTEWLLTSIPRPEDDIDTIKAYKLIFENNHLKLTEIESDDEEYKQLVEGEEILSNSFKQWRKDLRK</sequence>
<reference key="1">
    <citation type="journal article" date="2004" name="Nature">
        <title>Genome evolution in yeasts.</title>
        <authorList>
            <person name="Dujon B."/>
            <person name="Sherman D."/>
            <person name="Fischer G."/>
            <person name="Durrens P."/>
            <person name="Casaregola S."/>
            <person name="Lafontaine I."/>
            <person name="de Montigny J."/>
            <person name="Marck C."/>
            <person name="Neuveglise C."/>
            <person name="Talla E."/>
            <person name="Goffard N."/>
            <person name="Frangeul L."/>
            <person name="Aigle M."/>
            <person name="Anthouard V."/>
            <person name="Babour A."/>
            <person name="Barbe V."/>
            <person name="Barnay S."/>
            <person name="Blanchin S."/>
            <person name="Beckerich J.-M."/>
            <person name="Beyne E."/>
            <person name="Bleykasten C."/>
            <person name="Boisrame A."/>
            <person name="Boyer J."/>
            <person name="Cattolico L."/>
            <person name="Confanioleri F."/>
            <person name="de Daruvar A."/>
            <person name="Despons L."/>
            <person name="Fabre E."/>
            <person name="Fairhead C."/>
            <person name="Ferry-Dumazet H."/>
            <person name="Groppi A."/>
            <person name="Hantraye F."/>
            <person name="Hennequin C."/>
            <person name="Jauniaux N."/>
            <person name="Joyet P."/>
            <person name="Kachouri R."/>
            <person name="Kerrest A."/>
            <person name="Koszul R."/>
            <person name="Lemaire M."/>
            <person name="Lesur I."/>
            <person name="Ma L."/>
            <person name="Muller H."/>
            <person name="Nicaud J.-M."/>
            <person name="Nikolski M."/>
            <person name="Oztas S."/>
            <person name="Ozier-Kalogeropoulos O."/>
            <person name="Pellenz S."/>
            <person name="Potier S."/>
            <person name="Richard G.-F."/>
            <person name="Straub M.-L."/>
            <person name="Suleau A."/>
            <person name="Swennen D."/>
            <person name="Tekaia F."/>
            <person name="Wesolowski-Louvel M."/>
            <person name="Westhof E."/>
            <person name="Wirth B."/>
            <person name="Zeniou-Meyer M."/>
            <person name="Zivanovic Y."/>
            <person name="Bolotin-Fukuhara M."/>
            <person name="Thierry A."/>
            <person name="Bouchier C."/>
            <person name="Caudron B."/>
            <person name="Scarpelli C."/>
            <person name="Gaillardin C."/>
            <person name="Weissenbach J."/>
            <person name="Wincker P."/>
            <person name="Souciet J.-L."/>
        </authorList>
    </citation>
    <scope>NUCLEOTIDE SEQUENCE [LARGE SCALE GENOMIC DNA]</scope>
    <source>
        <strain>ATCC 8585 / CBS 2359 / DSM 70799 / NBRC 1267 / NRRL Y-1140 / WM37</strain>
    </source>
</reference>
<gene>
    <name type="primary">RAI1</name>
    <name type="ordered locus">KLLA0E12925g</name>
</gene>
<accession>Q6CNF8</accession>
<feature type="chain" id="PRO_0000249835" description="Decapping nuclease RAI1">
    <location>
        <begin position="1"/>
        <end position="384"/>
    </location>
</feature>
<feature type="binding site" evidence="1">
    <location>
        <position position="168"/>
    </location>
    <ligand>
        <name>a divalent metal cation</name>
        <dbReference type="ChEBI" id="CHEBI:60240"/>
    </ligand>
</feature>
<feature type="binding site" evidence="2">
    <location>
        <position position="217"/>
    </location>
    <ligand>
        <name>substrate</name>
    </ligand>
</feature>
<feature type="binding site" evidence="1">
    <location>
        <position position="219"/>
    </location>
    <ligand>
        <name>a divalent metal cation</name>
        <dbReference type="ChEBI" id="CHEBI:60240"/>
    </ligand>
</feature>
<feature type="binding site" evidence="1">
    <location>
        <position position="237"/>
    </location>
    <ligand>
        <name>a divalent metal cation</name>
        <dbReference type="ChEBI" id="CHEBI:60240"/>
    </ligand>
</feature>
<feature type="binding site" evidence="1">
    <location>
        <position position="238"/>
    </location>
    <ligand>
        <name>a divalent metal cation</name>
        <dbReference type="ChEBI" id="CHEBI:60240"/>
    </ligand>
</feature>
<feature type="binding site" evidence="2">
    <location>
        <position position="239"/>
    </location>
    <ligand>
        <name>substrate</name>
    </ligand>
</feature>
<feature type="binding site" evidence="2">
    <location>
        <position position="263"/>
    </location>
    <ligand>
        <name>substrate</name>
    </ligand>
</feature>
<name>DXO_KLULA</name>
<comment type="function">
    <text evidence="1 2 4 5">Decapping enzyme for NAD-capped RNAs: specifically hydrolyzes the nicotinamide adenine dinucleotide (NAD) cap from a subset of RNAs by removing the entire NAD moiety from the 5'-end of an NAD-capped RNA (By similarity). The NAD-cap is present at the 5'-end of some RNAs and snoRNAs. In contrast to the canonical 5'-end N7 methylguanosine (m7G) cap, the NAD cap promotes mRNA decay (By similarity). Also acts as a non-canonical decapping enzyme that removes the entire cap structure of m7G capped or incompletely capped RNAs (By similarity). Has decapping activity toward incomplete 5'-end m7G cap mRNAs such as unmethylated 5'-end-capped RNA (cap0), while it has no activity toward 2'-O-ribose methylated m7G cap (cap1) (By similarity). Also possesses RNA 5'-pyrophosphohydrolase activity by hydrolyzing the 5'-end triphosphate to release pyrophosphates (By similarity). Stimulates exoribonuclease activity of Rat1, allowing it to degrade RNAs with stable secondary structure more effectively (By similarity).</text>
</comment>
<comment type="catalytic activity">
    <reaction evidence="1">
        <text>a 5'-end NAD(+)-phospho-ribonucleoside in mRNA + H2O = a 5'-end phospho-ribonucleoside in mRNA + NAD(+) + H(+)</text>
        <dbReference type="Rhea" id="RHEA:60880"/>
        <dbReference type="Rhea" id="RHEA-COMP:15692"/>
        <dbReference type="Rhea" id="RHEA-COMP:15698"/>
        <dbReference type="ChEBI" id="CHEBI:15377"/>
        <dbReference type="ChEBI" id="CHEBI:15378"/>
        <dbReference type="ChEBI" id="CHEBI:57540"/>
        <dbReference type="ChEBI" id="CHEBI:138282"/>
        <dbReference type="ChEBI" id="CHEBI:144029"/>
    </reaction>
    <physiologicalReaction direction="left-to-right" evidence="1">
        <dbReference type="Rhea" id="RHEA:60881"/>
    </physiologicalReaction>
</comment>
<comment type="catalytic activity">
    <reaction evidence="3">
        <text>a 5'-end (N(7)-methyl 5'-triphosphoguanosine)-ribonucleoside-ribonucleotide in mRNA + H2O = a (N(7)-methyl 5'-triphosphoguanosine)-nucleoside + a 5'-end phospho-ribonucleoside in mRNA + H(+)</text>
        <dbReference type="Rhea" id="RHEA:66928"/>
        <dbReference type="Rhea" id="RHEA-COMP:15692"/>
        <dbReference type="Rhea" id="RHEA-COMP:17313"/>
        <dbReference type="ChEBI" id="CHEBI:15377"/>
        <dbReference type="ChEBI" id="CHEBI:15378"/>
        <dbReference type="ChEBI" id="CHEBI:138282"/>
        <dbReference type="ChEBI" id="CHEBI:172876"/>
        <dbReference type="ChEBI" id="CHEBI:172877"/>
    </reaction>
    <physiologicalReaction direction="left-to-right" evidence="3">
        <dbReference type="Rhea" id="RHEA:66929"/>
    </physiologicalReaction>
</comment>
<comment type="catalytic activity">
    <reaction evidence="1">
        <text>a 5'-end triphospho-ribonucleoside in mRNA + H2O = a 5'-end phospho-ribonucleoside in mRNA + diphosphate + H(+)</text>
        <dbReference type="Rhea" id="RHEA:78683"/>
        <dbReference type="Rhea" id="RHEA-COMP:15692"/>
        <dbReference type="Rhea" id="RHEA-COMP:17164"/>
        <dbReference type="ChEBI" id="CHEBI:15377"/>
        <dbReference type="ChEBI" id="CHEBI:15378"/>
        <dbReference type="ChEBI" id="CHEBI:33019"/>
        <dbReference type="ChEBI" id="CHEBI:138282"/>
        <dbReference type="ChEBI" id="CHEBI:167618"/>
    </reaction>
    <physiologicalReaction direction="left-to-right" evidence="1">
        <dbReference type="Rhea" id="RHEA:78684"/>
    </physiologicalReaction>
</comment>
<comment type="cofactor">
    <cofactor evidence="5">
        <name>a divalent metal cation</name>
        <dbReference type="ChEBI" id="CHEBI:60240"/>
    </cofactor>
    <text evidence="5">Divalent metal cation.</text>
</comment>
<comment type="subunit">
    <text evidence="1">Interacts with RAT1; the interaction is direct, stabilizes RAT1 protein structure and stimulates its exoribonuclease activity (By similarity). The interaction also stimulates RAI1 pyrophosphohydrolase activity, probably by recruiting it to mRNA substrates (By similarity).</text>
</comment>
<comment type="subcellular location">
    <subcellularLocation>
        <location evidence="3">Nucleus</location>
    </subcellularLocation>
</comment>
<comment type="similarity">
    <text evidence="6">Belongs to the DXO/Dom3Z family.</text>
</comment>
<protein>
    <recommendedName>
        <fullName evidence="6">Decapping nuclease RAI1</fullName>
        <ecNumber evidence="5">3.6.1.-</ecNumber>
    </recommendedName>
    <alternativeName>
        <fullName evidence="6">NAD-capped RNA hydrolase RAI1</fullName>
        <shortName evidence="6">DeNADding enzyme RAI1</shortName>
        <ecNumber evidence="1">3.6.1.-</ecNumber>
    </alternativeName>
</protein>
<dbReference type="EC" id="3.6.1.-" evidence="5 1"/>
<dbReference type="EMBL" id="CR382125">
    <property type="protein sequence ID" value="CAG99618.1"/>
    <property type="molecule type" value="Genomic_DNA"/>
</dbReference>
<dbReference type="RefSeq" id="XP_454531.1">
    <property type="nucleotide sequence ID" value="XM_454531.1"/>
</dbReference>
<dbReference type="SMR" id="Q6CNF8"/>
<dbReference type="FunCoup" id="Q6CNF8">
    <property type="interactions" value="667"/>
</dbReference>
<dbReference type="STRING" id="284590.Q6CNF8"/>
<dbReference type="PaxDb" id="284590-Q6CNF8"/>
<dbReference type="KEGG" id="kla:KLLA0_E12893g"/>
<dbReference type="eggNOG" id="KOG1982">
    <property type="taxonomic scope" value="Eukaryota"/>
</dbReference>
<dbReference type="HOGENOM" id="CLU_024877_4_1_1"/>
<dbReference type="InParanoid" id="Q6CNF8"/>
<dbReference type="OMA" id="VVTWRGH"/>
<dbReference type="Proteomes" id="UP000000598">
    <property type="component" value="Chromosome E"/>
</dbReference>
<dbReference type="GO" id="GO:0005829">
    <property type="term" value="C:cytosol"/>
    <property type="evidence" value="ECO:0007669"/>
    <property type="project" value="TreeGrafter"/>
</dbReference>
<dbReference type="GO" id="GO:0005634">
    <property type="term" value="C:nucleus"/>
    <property type="evidence" value="ECO:0007669"/>
    <property type="project" value="UniProtKB-SubCell"/>
</dbReference>
<dbReference type="GO" id="GO:0046872">
    <property type="term" value="F:metal ion binding"/>
    <property type="evidence" value="ECO:0007669"/>
    <property type="project" value="UniProtKB-KW"/>
</dbReference>
<dbReference type="GO" id="GO:0034353">
    <property type="term" value="F:mRNA 5'-diphosphatase activity"/>
    <property type="evidence" value="ECO:0007669"/>
    <property type="project" value="TreeGrafter"/>
</dbReference>
<dbReference type="GO" id="GO:0004518">
    <property type="term" value="F:nuclease activity"/>
    <property type="evidence" value="ECO:0007669"/>
    <property type="project" value="UniProtKB-KW"/>
</dbReference>
<dbReference type="GO" id="GO:0000166">
    <property type="term" value="F:nucleotide binding"/>
    <property type="evidence" value="ECO:0007669"/>
    <property type="project" value="UniProtKB-KW"/>
</dbReference>
<dbReference type="GO" id="GO:0003723">
    <property type="term" value="F:RNA binding"/>
    <property type="evidence" value="ECO:0007669"/>
    <property type="project" value="UniProtKB-KW"/>
</dbReference>
<dbReference type="GO" id="GO:0110152">
    <property type="term" value="F:RNA NAD+-cap (NAD+-forming) hydrolase activity"/>
    <property type="evidence" value="ECO:0007669"/>
    <property type="project" value="RHEA"/>
</dbReference>
<dbReference type="GO" id="GO:0006397">
    <property type="term" value="P:mRNA processing"/>
    <property type="evidence" value="ECO:0007669"/>
    <property type="project" value="UniProtKB-KW"/>
</dbReference>
<dbReference type="GO" id="GO:0110155">
    <property type="term" value="P:NAD-cap decapping"/>
    <property type="evidence" value="ECO:0007669"/>
    <property type="project" value="TreeGrafter"/>
</dbReference>
<dbReference type="GO" id="GO:0000956">
    <property type="term" value="P:nuclear-transcribed mRNA catabolic process"/>
    <property type="evidence" value="ECO:0007669"/>
    <property type="project" value="TreeGrafter"/>
</dbReference>
<dbReference type="InterPro" id="IPR013961">
    <property type="entry name" value="RAI1"/>
</dbReference>
<dbReference type="InterPro" id="IPR039039">
    <property type="entry name" value="RAI1-like_fam"/>
</dbReference>
<dbReference type="PANTHER" id="PTHR12395:SF9">
    <property type="entry name" value="DECAPPING AND EXORIBONUCLEASE PROTEIN"/>
    <property type="match status" value="1"/>
</dbReference>
<dbReference type="PANTHER" id="PTHR12395">
    <property type="entry name" value="DOM-3 RELATED"/>
    <property type="match status" value="1"/>
</dbReference>
<dbReference type="Pfam" id="PF08652">
    <property type="entry name" value="RAI1"/>
    <property type="match status" value="1"/>
</dbReference>
<proteinExistence type="inferred from homology"/>